<dbReference type="EMBL" id="BA000001">
    <property type="protein sequence ID" value="BAA30107.1"/>
    <property type="molecule type" value="Genomic_DNA"/>
</dbReference>
<dbReference type="PIR" id="E71093">
    <property type="entry name" value="E71093"/>
</dbReference>
<dbReference type="RefSeq" id="WP_010885096.1">
    <property type="nucleotide sequence ID" value="NC_000961.1"/>
</dbReference>
<dbReference type="PDB" id="3D7A">
    <property type="method" value="X-ray"/>
    <property type="resolution" value="1.90 A"/>
    <property type="chains" value="A/B=1-138"/>
</dbReference>
<dbReference type="PDBsum" id="3D7A"/>
<dbReference type="SMR" id="O58738"/>
<dbReference type="STRING" id="70601.gene:9377967"/>
<dbReference type="EnsemblBacteria" id="BAA30107">
    <property type="protein sequence ID" value="BAA30107"/>
    <property type="gene ID" value="BAA30107"/>
</dbReference>
<dbReference type="GeneID" id="1443331"/>
<dbReference type="KEGG" id="pho:PH1010"/>
<dbReference type="eggNOG" id="arCOG01043">
    <property type="taxonomic scope" value="Archaea"/>
</dbReference>
<dbReference type="OrthoDB" id="7819at2157"/>
<dbReference type="EvolutionaryTrace" id="O58738"/>
<dbReference type="Proteomes" id="UP000000752">
    <property type="component" value="Chromosome"/>
</dbReference>
<dbReference type="Gene3D" id="3.30.1440.10">
    <property type="match status" value="1"/>
</dbReference>
<dbReference type="HAMAP" id="MF_01112">
    <property type="entry name" value="UPF0201"/>
    <property type="match status" value="1"/>
</dbReference>
<dbReference type="InterPro" id="IPR002739">
    <property type="entry name" value="PAB1135-like"/>
</dbReference>
<dbReference type="InterPro" id="IPR022803">
    <property type="entry name" value="Ribosomal_uL5_dom_sf"/>
</dbReference>
<dbReference type="NCBIfam" id="NF001687">
    <property type="entry name" value="PRK00447.1"/>
    <property type="match status" value="1"/>
</dbReference>
<dbReference type="PANTHER" id="PTHR39652">
    <property type="entry name" value="UPF0201 PROTEIN TK1335"/>
    <property type="match status" value="1"/>
</dbReference>
<dbReference type="PANTHER" id="PTHR39652:SF1">
    <property type="entry name" value="UPF0201 PROTEIN TK1335"/>
    <property type="match status" value="1"/>
</dbReference>
<dbReference type="Pfam" id="PF01877">
    <property type="entry name" value="RNA_binding"/>
    <property type="match status" value="1"/>
</dbReference>
<dbReference type="SUPFAM" id="SSF55282">
    <property type="entry name" value="RL5-like"/>
    <property type="match status" value="1"/>
</dbReference>
<comment type="similarity">
    <text evidence="1">Belongs to the UPF0201 family.</text>
</comment>
<evidence type="ECO:0000255" key="1">
    <source>
        <dbReference type="HAMAP-Rule" id="MF_01112"/>
    </source>
</evidence>
<evidence type="ECO:0007829" key="2">
    <source>
        <dbReference type="PDB" id="3D7A"/>
    </source>
</evidence>
<gene>
    <name type="ordered locus">PH1010</name>
</gene>
<protein>
    <recommendedName>
        <fullName evidence="1">UPF0201 protein PH1010</fullName>
    </recommendedName>
</protein>
<accession>O58738</accession>
<keyword id="KW-0002">3D-structure</keyword>
<feature type="chain" id="PRO_0000094516" description="UPF0201 protein PH1010">
    <location>
        <begin position="1"/>
        <end position="138"/>
    </location>
</feature>
<feature type="strand" evidence="2">
    <location>
        <begin position="6"/>
        <end position="14"/>
    </location>
</feature>
<feature type="helix" evidence="2">
    <location>
        <begin position="20"/>
        <end position="30"/>
    </location>
</feature>
<feature type="strand" evidence="2">
    <location>
        <begin position="35"/>
        <end position="40"/>
    </location>
</feature>
<feature type="strand" evidence="2">
    <location>
        <begin position="42"/>
        <end position="51"/>
    </location>
</feature>
<feature type="turn" evidence="2">
    <location>
        <begin position="54"/>
        <end position="57"/>
    </location>
</feature>
<feature type="helix" evidence="2">
    <location>
        <begin position="58"/>
        <end position="66"/>
    </location>
</feature>
<feature type="helix" evidence="2">
    <location>
        <begin position="70"/>
        <end position="79"/>
    </location>
</feature>
<feature type="strand" evidence="2">
    <location>
        <begin position="85"/>
        <end position="91"/>
    </location>
</feature>
<feature type="helix" evidence="2">
    <location>
        <begin position="92"/>
        <end position="96"/>
    </location>
</feature>
<feature type="strand" evidence="2">
    <location>
        <begin position="110"/>
        <end position="116"/>
    </location>
</feature>
<feature type="helix" evidence="2">
    <location>
        <begin position="120"/>
        <end position="127"/>
    </location>
</feature>
<name>Y1010_PYRHO</name>
<reference key="1">
    <citation type="journal article" date="1998" name="DNA Res.">
        <title>Complete sequence and gene organization of the genome of a hyper-thermophilic archaebacterium, Pyrococcus horikoshii OT3.</title>
        <authorList>
            <person name="Kawarabayasi Y."/>
            <person name="Sawada M."/>
            <person name="Horikawa H."/>
            <person name="Haikawa Y."/>
            <person name="Hino Y."/>
            <person name="Yamamoto S."/>
            <person name="Sekine M."/>
            <person name="Baba S."/>
            <person name="Kosugi H."/>
            <person name="Hosoyama A."/>
            <person name="Nagai Y."/>
            <person name="Sakai M."/>
            <person name="Ogura K."/>
            <person name="Otsuka R."/>
            <person name="Nakazawa H."/>
            <person name="Takamiya M."/>
            <person name="Ohfuku Y."/>
            <person name="Funahashi T."/>
            <person name="Tanaka T."/>
            <person name="Kudoh Y."/>
            <person name="Yamazaki J."/>
            <person name="Kushida N."/>
            <person name="Oguchi A."/>
            <person name="Aoki K."/>
            <person name="Yoshizawa T."/>
            <person name="Nakamura Y."/>
            <person name="Robb F.T."/>
            <person name="Horikoshi K."/>
            <person name="Masuchi Y."/>
            <person name="Shizuya H."/>
            <person name="Kikuchi H."/>
        </authorList>
    </citation>
    <scope>NUCLEOTIDE SEQUENCE [LARGE SCALE GENOMIC DNA]</scope>
    <source>
        <strain>ATCC 700860 / DSM 12428 / JCM 9974 / NBRC 100139 / OT-3</strain>
    </source>
</reference>
<proteinExistence type="evidence at protein level"/>
<organism>
    <name type="scientific">Pyrococcus horikoshii (strain ATCC 700860 / DSM 12428 / JCM 9974 / NBRC 100139 / OT-3)</name>
    <dbReference type="NCBI Taxonomy" id="70601"/>
    <lineage>
        <taxon>Archaea</taxon>
        <taxon>Methanobacteriati</taxon>
        <taxon>Methanobacteriota</taxon>
        <taxon>Thermococci</taxon>
        <taxon>Thermococcales</taxon>
        <taxon>Thermococcaceae</taxon>
        <taxon>Pyrococcus</taxon>
    </lineage>
</organism>
<sequence length="138" mass="16056">MMTMFEEVEVEAYVYPTEDIRKVKKAMLNLIPGLQFEAFDKGEYVILVGRTKDKRALQRLYELFRGQQILDTARMMLEEGYFGEEIIIKVHKQVAYVGKVNFNEDSPLGPITITIRTKEPQKLMKWLAPRTKDGVPIE</sequence>